<dbReference type="EMBL" id="AY309025">
    <property type="protein sequence ID" value="AAP70322.1"/>
    <property type="molecule type" value="Genomic_DNA"/>
</dbReference>
<dbReference type="RefSeq" id="YP_009649026.1">
    <property type="nucleotide sequence ID" value="NC_042692.1"/>
</dbReference>
<dbReference type="SMR" id="Q6W6Q8"/>
<dbReference type="GeneID" id="40486783"/>
<dbReference type="GO" id="GO:0009535">
    <property type="term" value="C:chloroplast thylakoid membrane"/>
    <property type="evidence" value="ECO:0007669"/>
    <property type="project" value="UniProtKB-SubCell"/>
</dbReference>
<dbReference type="GO" id="GO:0009539">
    <property type="term" value="C:photosystem II reaction center"/>
    <property type="evidence" value="ECO:0007669"/>
    <property type="project" value="InterPro"/>
</dbReference>
<dbReference type="GO" id="GO:0015979">
    <property type="term" value="P:photosynthesis"/>
    <property type="evidence" value="ECO:0007669"/>
    <property type="project" value="UniProtKB-UniRule"/>
</dbReference>
<dbReference type="Gene3D" id="6.10.250.2070">
    <property type="match status" value="1"/>
</dbReference>
<dbReference type="HAMAP" id="MF_01305">
    <property type="entry name" value="PSII_PsbJ"/>
    <property type="match status" value="1"/>
</dbReference>
<dbReference type="InterPro" id="IPR002682">
    <property type="entry name" value="PSII_PsbJ"/>
</dbReference>
<dbReference type="InterPro" id="IPR037267">
    <property type="entry name" value="PSII_PsbJ_sf"/>
</dbReference>
<dbReference type="NCBIfam" id="NF002722">
    <property type="entry name" value="PRK02565.1"/>
    <property type="match status" value="1"/>
</dbReference>
<dbReference type="PANTHER" id="PTHR34812">
    <property type="entry name" value="PHOTOSYSTEM II REACTION CENTER PROTEIN J"/>
    <property type="match status" value="1"/>
</dbReference>
<dbReference type="PANTHER" id="PTHR34812:SF3">
    <property type="entry name" value="PHOTOSYSTEM II REACTION CENTER PROTEIN J"/>
    <property type="match status" value="1"/>
</dbReference>
<dbReference type="Pfam" id="PF01788">
    <property type="entry name" value="PsbJ"/>
    <property type="match status" value="1"/>
</dbReference>
<dbReference type="SUPFAM" id="SSF161021">
    <property type="entry name" value="Photosystem II reaction center protein J, PsbJ"/>
    <property type="match status" value="1"/>
</dbReference>
<reference key="1">
    <citation type="submission" date="2003-05" db="EMBL/GenBank/DDBJ databases">
        <title>Chloroplast psbL and psbJ genes of Chinese Hordeum species.</title>
        <authorList>
            <person name="Wei Y.-M."/>
            <person name="Yan Z.-H."/>
            <person name="Wu W."/>
            <person name="Zhang Z.-Q."/>
            <person name="Zheng Y.-L."/>
        </authorList>
    </citation>
    <scope>NUCLEOTIDE SEQUENCE [GENOMIC DNA]</scope>
</reference>
<gene>
    <name evidence="1" type="primary">psbJ</name>
</gene>
<proteinExistence type="inferred from homology"/>
<protein>
    <recommendedName>
        <fullName evidence="1">Photosystem II reaction center protein J</fullName>
        <shortName evidence="1">PSII-J</shortName>
    </recommendedName>
</protein>
<evidence type="ECO:0000255" key="1">
    <source>
        <dbReference type="HAMAP-Rule" id="MF_01305"/>
    </source>
</evidence>
<accession>Q6W6Q8</accession>
<feature type="chain" id="PRO_0000216594" description="Photosystem II reaction center protein J">
    <location>
        <begin position="1"/>
        <end position="40"/>
    </location>
</feature>
<feature type="transmembrane region" description="Helical" evidence="1">
    <location>
        <begin position="8"/>
        <end position="28"/>
    </location>
</feature>
<organism>
    <name type="scientific">Hordeum vulgare subsp. spontaneum</name>
    <name type="common">Wild barley</name>
    <name type="synonym">Hordeum spontaneum</name>
    <dbReference type="NCBI Taxonomy" id="77009"/>
    <lineage>
        <taxon>Eukaryota</taxon>
        <taxon>Viridiplantae</taxon>
        <taxon>Streptophyta</taxon>
        <taxon>Embryophyta</taxon>
        <taxon>Tracheophyta</taxon>
        <taxon>Spermatophyta</taxon>
        <taxon>Magnoliopsida</taxon>
        <taxon>Liliopsida</taxon>
        <taxon>Poales</taxon>
        <taxon>Poaceae</taxon>
        <taxon>BOP clade</taxon>
        <taxon>Pooideae</taxon>
        <taxon>Triticodae</taxon>
        <taxon>Triticeae</taxon>
        <taxon>Hordeinae</taxon>
        <taxon>Hordeum</taxon>
    </lineage>
</organism>
<keyword id="KW-0150">Chloroplast</keyword>
<keyword id="KW-0472">Membrane</keyword>
<keyword id="KW-0602">Photosynthesis</keyword>
<keyword id="KW-0604">Photosystem II</keyword>
<keyword id="KW-0934">Plastid</keyword>
<keyword id="KW-0674">Reaction center</keyword>
<keyword id="KW-0793">Thylakoid</keyword>
<keyword id="KW-0812">Transmembrane</keyword>
<keyword id="KW-1133">Transmembrane helix</keyword>
<sequence>MADTTGRIPLWLIGTVAGIPVIGLVGVFFYGSYSGLGSSL</sequence>
<name>PSBJ_HORVS</name>
<geneLocation type="chloroplast"/>
<comment type="function">
    <text evidence="1">One of the components of the core complex of photosystem II (PSII). PSII is a light-driven water:plastoquinone oxidoreductase that uses light energy to abstract electrons from H(2)O, generating O(2) and a proton gradient subsequently used for ATP formation. It consists of a core antenna complex that captures photons, and an electron transfer chain that converts photonic excitation into a charge separation.</text>
</comment>
<comment type="subunit">
    <text evidence="1">PSII is composed of 1 copy each of membrane proteins PsbA, PsbB, PsbC, PsbD, PsbE, PsbF, PsbH, PsbI, PsbJ, PsbK, PsbL, PsbM, PsbT, PsbX, PsbY, PsbZ, Psb30/Ycf12, at least 3 peripheral proteins of the oxygen-evolving complex and a large number of cofactors. It forms dimeric complexes.</text>
</comment>
<comment type="subcellular location">
    <subcellularLocation>
        <location evidence="1">Plastid</location>
        <location evidence="1">Chloroplast thylakoid membrane</location>
        <topology evidence="1">Single-pass membrane protein</topology>
    </subcellularLocation>
</comment>
<comment type="similarity">
    <text evidence="1">Belongs to the PsbJ family.</text>
</comment>